<evidence type="ECO:0000255" key="1"/>
<evidence type="ECO:0000305" key="2"/>
<keyword id="KW-1003">Cell membrane</keyword>
<keyword id="KW-0472">Membrane</keyword>
<keyword id="KW-1185">Reference proteome</keyword>
<keyword id="KW-0812">Transmembrane</keyword>
<keyword id="KW-1133">Transmembrane helix</keyword>
<proteinExistence type="predicted"/>
<dbReference type="EMBL" id="AJ235272">
    <property type="protein sequence ID" value="CAA15014.1"/>
    <property type="molecule type" value="Genomic_DNA"/>
</dbReference>
<dbReference type="PIR" id="D71661">
    <property type="entry name" value="D71661"/>
</dbReference>
<dbReference type="RefSeq" id="NP_220938.1">
    <property type="nucleotide sequence ID" value="NC_000963.1"/>
</dbReference>
<dbReference type="RefSeq" id="WP_004597869.1">
    <property type="nucleotide sequence ID" value="NC_000963.1"/>
</dbReference>
<dbReference type="STRING" id="272947.gene:17555646"/>
<dbReference type="EnsemblBacteria" id="CAA15014">
    <property type="protein sequence ID" value="CAA15014"/>
    <property type="gene ID" value="CAA15014"/>
</dbReference>
<dbReference type="KEGG" id="rpr:RP566"/>
<dbReference type="PATRIC" id="fig|272947.5.peg.582"/>
<dbReference type="HOGENOM" id="CLU_1546445_0_0_5"/>
<dbReference type="OrthoDB" id="7161178at2"/>
<dbReference type="Proteomes" id="UP000002480">
    <property type="component" value="Chromosome"/>
</dbReference>
<dbReference type="GO" id="GO:0005886">
    <property type="term" value="C:plasma membrane"/>
    <property type="evidence" value="ECO:0007669"/>
    <property type="project" value="UniProtKB-SubCell"/>
</dbReference>
<protein>
    <recommendedName>
        <fullName>Uncharacterized protein RP566</fullName>
    </recommendedName>
</protein>
<gene>
    <name type="ordered locus">RP566</name>
</gene>
<sequence>MLKIKQEIYKNSLQVILKFFFALLCFCIILFPLLSYKINIQSRIFPAMEIIFIYYFMSLYSLNIFSIFFLGLLIDQISGMPIGTDSLVFVSANIIYKLSSKYFLAKNYLINFVVFCFYCLFILNFKYLLVTIKNLEVEGYLIIFFQSLTTIFSYNIIRLILDSPMDYFKKYAK</sequence>
<name>Y566_RICPR</name>
<accession>Q9ZCY5</accession>
<reference key="1">
    <citation type="journal article" date="1998" name="Nature">
        <title>The genome sequence of Rickettsia prowazekii and the origin of mitochondria.</title>
        <authorList>
            <person name="Andersson S.G.E."/>
            <person name="Zomorodipour A."/>
            <person name="Andersson J.O."/>
            <person name="Sicheritz-Ponten T."/>
            <person name="Alsmark U.C.M."/>
            <person name="Podowski R.M."/>
            <person name="Naeslund A.K."/>
            <person name="Eriksson A.-S."/>
            <person name="Winkler H.H."/>
            <person name="Kurland C.G."/>
        </authorList>
    </citation>
    <scope>NUCLEOTIDE SEQUENCE [LARGE SCALE GENOMIC DNA]</scope>
    <source>
        <strain>Madrid E</strain>
    </source>
</reference>
<comment type="subcellular location">
    <subcellularLocation>
        <location evidence="2">Cell membrane</location>
        <topology evidence="2">Multi-pass membrane protein</topology>
    </subcellularLocation>
</comment>
<feature type="chain" id="PRO_0000101396" description="Uncharacterized protein RP566">
    <location>
        <begin position="1"/>
        <end position="173"/>
    </location>
</feature>
<feature type="transmembrane region" description="Helical" evidence="1">
    <location>
        <begin position="13"/>
        <end position="35"/>
    </location>
</feature>
<feature type="transmembrane region" description="Helical" evidence="1">
    <location>
        <begin position="50"/>
        <end position="72"/>
    </location>
</feature>
<feature type="transmembrane region" description="Helical" evidence="1">
    <location>
        <begin position="107"/>
        <end position="129"/>
    </location>
</feature>
<feature type="transmembrane region" description="Helical" evidence="1">
    <location>
        <begin position="139"/>
        <end position="161"/>
    </location>
</feature>
<organism>
    <name type="scientific">Rickettsia prowazekii (strain Madrid E)</name>
    <dbReference type="NCBI Taxonomy" id="272947"/>
    <lineage>
        <taxon>Bacteria</taxon>
        <taxon>Pseudomonadati</taxon>
        <taxon>Pseudomonadota</taxon>
        <taxon>Alphaproteobacteria</taxon>
        <taxon>Rickettsiales</taxon>
        <taxon>Rickettsiaceae</taxon>
        <taxon>Rickettsieae</taxon>
        <taxon>Rickettsia</taxon>
        <taxon>typhus group</taxon>
    </lineage>
</organism>